<keyword id="KW-0131">Cell cycle</keyword>
<keyword id="KW-0132">Cell division</keyword>
<organism>
    <name type="scientific">Salmonella paratyphi A (strain ATCC 9150 / SARB42)</name>
    <dbReference type="NCBI Taxonomy" id="295319"/>
    <lineage>
        <taxon>Bacteria</taxon>
        <taxon>Pseudomonadati</taxon>
        <taxon>Pseudomonadota</taxon>
        <taxon>Gammaproteobacteria</taxon>
        <taxon>Enterobacterales</taxon>
        <taxon>Enterobacteriaceae</taxon>
        <taxon>Salmonella</taxon>
    </lineage>
</organism>
<comment type="function">
    <text evidence="1">Prevents the cell division inhibition by proteins MinC and MinD at internal division sites while permitting inhibition at polar sites. This ensures cell division at the proper site by restricting the formation of a division septum at the midpoint of the long axis of the cell.</text>
</comment>
<comment type="similarity">
    <text evidence="1">Belongs to the MinE family.</text>
</comment>
<gene>
    <name evidence="1" type="primary">minE</name>
    <name type="ordered locus">SPA1057</name>
</gene>
<sequence length="88" mass="10182">MALLDFFLSRKKSTANIAKERLQIIVAERRRSDAEPHYLPQLRKDILEVICKYVQIDPEMVTVQLEQKDGDISILELNVTLPEAEESK</sequence>
<name>MINE_SALPA</name>
<protein>
    <recommendedName>
        <fullName evidence="1">Cell division topological specificity factor</fullName>
    </recommendedName>
</protein>
<reference key="1">
    <citation type="journal article" date="2004" name="Nat. Genet.">
        <title>Comparison of genome degradation in Paratyphi A and Typhi, human-restricted serovars of Salmonella enterica that cause typhoid.</title>
        <authorList>
            <person name="McClelland M."/>
            <person name="Sanderson K.E."/>
            <person name="Clifton S.W."/>
            <person name="Latreille P."/>
            <person name="Porwollik S."/>
            <person name="Sabo A."/>
            <person name="Meyer R."/>
            <person name="Bieri T."/>
            <person name="Ozersky P."/>
            <person name="McLellan M."/>
            <person name="Harkins C.R."/>
            <person name="Wang C."/>
            <person name="Nguyen C."/>
            <person name="Berghoff A."/>
            <person name="Elliott G."/>
            <person name="Kohlberg S."/>
            <person name="Strong C."/>
            <person name="Du F."/>
            <person name="Carter J."/>
            <person name="Kremizki C."/>
            <person name="Layman D."/>
            <person name="Leonard S."/>
            <person name="Sun H."/>
            <person name="Fulton L."/>
            <person name="Nash W."/>
            <person name="Miner T."/>
            <person name="Minx P."/>
            <person name="Delehaunty K."/>
            <person name="Fronick C."/>
            <person name="Magrini V."/>
            <person name="Nhan M."/>
            <person name="Warren W."/>
            <person name="Florea L."/>
            <person name="Spieth J."/>
            <person name="Wilson R.K."/>
        </authorList>
    </citation>
    <scope>NUCLEOTIDE SEQUENCE [LARGE SCALE GENOMIC DNA]</scope>
    <source>
        <strain>ATCC 9150 / SARB42</strain>
    </source>
</reference>
<dbReference type="EMBL" id="CP000026">
    <property type="protein sequence ID" value="AAV77028.1"/>
    <property type="molecule type" value="Genomic_DNA"/>
</dbReference>
<dbReference type="RefSeq" id="WP_001185666.1">
    <property type="nucleotide sequence ID" value="NC_006511.1"/>
</dbReference>
<dbReference type="SMR" id="Q5PI85"/>
<dbReference type="GeneID" id="92972923"/>
<dbReference type="KEGG" id="spt:SPA1057"/>
<dbReference type="HOGENOM" id="CLU_137929_2_2_6"/>
<dbReference type="Proteomes" id="UP000008185">
    <property type="component" value="Chromosome"/>
</dbReference>
<dbReference type="GO" id="GO:0051301">
    <property type="term" value="P:cell division"/>
    <property type="evidence" value="ECO:0007669"/>
    <property type="project" value="UniProtKB-KW"/>
</dbReference>
<dbReference type="GO" id="GO:0032955">
    <property type="term" value="P:regulation of division septum assembly"/>
    <property type="evidence" value="ECO:0007669"/>
    <property type="project" value="InterPro"/>
</dbReference>
<dbReference type="FunFam" id="3.30.1070.10:FF:000001">
    <property type="entry name" value="Cell division topological specificity factor"/>
    <property type="match status" value="1"/>
</dbReference>
<dbReference type="Gene3D" id="3.30.1070.10">
    <property type="entry name" value="Cell division topological specificity factor MinE"/>
    <property type="match status" value="1"/>
</dbReference>
<dbReference type="HAMAP" id="MF_00262">
    <property type="entry name" value="MinE"/>
    <property type="match status" value="1"/>
</dbReference>
<dbReference type="InterPro" id="IPR005527">
    <property type="entry name" value="MinE"/>
</dbReference>
<dbReference type="InterPro" id="IPR036707">
    <property type="entry name" value="MinE_sf"/>
</dbReference>
<dbReference type="NCBIfam" id="TIGR01215">
    <property type="entry name" value="minE"/>
    <property type="match status" value="1"/>
</dbReference>
<dbReference type="NCBIfam" id="NF001422">
    <property type="entry name" value="PRK00296.1"/>
    <property type="match status" value="1"/>
</dbReference>
<dbReference type="Pfam" id="PF03776">
    <property type="entry name" value="MinE"/>
    <property type="match status" value="1"/>
</dbReference>
<dbReference type="SUPFAM" id="SSF55229">
    <property type="entry name" value="Cell division protein MinE topological specificity domain"/>
    <property type="match status" value="1"/>
</dbReference>
<accession>Q5PI85</accession>
<proteinExistence type="inferred from homology"/>
<feature type="chain" id="PRO_0000298179" description="Cell division topological specificity factor">
    <location>
        <begin position="1"/>
        <end position="88"/>
    </location>
</feature>
<evidence type="ECO:0000255" key="1">
    <source>
        <dbReference type="HAMAP-Rule" id="MF_00262"/>
    </source>
</evidence>